<dbReference type="EMBL" id="AY316677">
    <property type="protein sequence ID" value="AAQ87007.1"/>
    <property type="molecule type" value="mRNA"/>
</dbReference>
<dbReference type="EMBL" id="AB013390">
    <property type="protein sequence ID" value="BAB08456.1"/>
    <property type="molecule type" value="Genomic_DNA"/>
</dbReference>
<dbReference type="EMBL" id="CP002688">
    <property type="protein sequence ID" value="AED98349.1"/>
    <property type="molecule type" value="Genomic_DNA"/>
</dbReference>
<dbReference type="EMBL" id="CP002688">
    <property type="protein sequence ID" value="AED98350.1"/>
    <property type="molecule type" value="Genomic_DNA"/>
</dbReference>
<dbReference type="EMBL" id="CP002688">
    <property type="protein sequence ID" value="ANM68746.1"/>
    <property type="molecule type" value="Genomic_DNA"/>
</dbReference>
<dbReference type="EMBL" id="AF446873">
    <property type="protein sequence ID" value="AAL38606.1"/>
    <property type="molecule type" value="mRNA"/>
</dbReference>
<dbReference type="EMBL" id="AY052213">
    <property type="protein sequence ID" value="AAK97683.1"/>
    <property type="molecule type" value="mRNA"/>
</dbReference>
<dbReference type="RefSeq" id="NP_001330470.1">
    <molecule id="Q9FJX5-1"/>
    <property type="nucleotide sequence ID" value="NM_001345832.1"/>
</dbReference>
<dbReference type="RefSeq" id="NP_201549.1">
    <molecule id="Q9FJX5-1"/>
    <property type="nucleotide sequence ID" value="NM_126148.4"/>
</dbReference>
<dbReference type="RefSeq" id="NP_975007.1">
    <molecule id="Q9FJX5-2"/>
    <property type="nucleotide sequence ID" value="NM_203278.2"/>
</dbReference>
<dbReference type="SMR" id="Q9FJX5"/>
<dbReference type="BioGRID" id="22126">
    <property type="interactions" value="3"/>
</dbReference>
<dbReference type="FunCoup" id="Q9FJX5">
    <property type="interactions" value="11"/>
</dbReference>
<dbReference type="IntAct" id="Q9FJX5">
    <property type="interactions" value="4"/>
</dbReference>
<dbReference type="STRING" id="3702.Q9FJX5"/>
<dbReference type="PaxDb" id="3702-AT5G67480.2"/>
<dbReference type="EnsemblPlants" id="AT5G67480.1">
    <molecule id="Q9FJX5-1"/>
    <property type="protein sequence ID" value="AT5G67480.1"/>
    <property type="gene ID" value="AT5G67480"/>
</dbReference>
<dbReference type="EnsemblPlants" id="AT5G67480.2">
    <molecule id="Q9FJX5-2"/>
    <property type="protein sequence ID" value="AT5G67480.2"/>
    <property type="gene ID" value="AT5G67480"/>
</dbReference>
<dbReference type="EnsemblPlants" id="AT5G67480.3">
    <molecule id="Q9FJX5-1"/>
    <property type="protein sequence ID" value="AT5G67480.3"/>
    <property type="gene ID" value="AT5G67480"/>
</dbReference>
<dbReference type="GeneID" id="836884"/>
<dbReference type="Gramene" id="AT5G67480.1">
    <molecule id="Q9FJX5-1"/>
    <property type="protein sequence ID" value="AT5G67480.1"/>
    <property type="gene ID" value="AT5G67480"/>
</dbReference>
<dbReference type="Gramene" id="AT5G67480.2">
    <molecule id="Q9FJX5-2"/>
    <property type="protein sequence ID" value="AT5G67480.2"/>
    <property type="gene ID" value="AT5G67480"/>
</dbReference>
<dbReference type="Gramene" id="AT5G67480.3">
    <molecule id="Q9FJX5-1"/>
    <property type="protein sequence ID" value="AT5G67480.3"/>
    <property type="gene ID" value="AT5G67480"/>
</dbReference>
<dbReference type="KEGG" id="ath:AT5G67480"/>
<dbReference type="Araport" id="AT5G67480"/>
<dbReference type="TAIR" id="AT5G67480">
    <property type="gene designation" value="BT4"/>
</dbReference>
<dbReference type="eggNOG" id="KOG1778">
    <property type="taxonomic scope" value="Eukaryota"/>
</dbReference>
<dbReference type="HOGENOM" id="CLU_037906_1_0_1"/>
<dbReference type="InParanoid" id="Q9FJX5"/>
<dbReference type="PhylomeDB" id="Q9FJX5"/>
<dbReference type="UniPathway" id="UPA00143"/>
<dbReference type="PRO" id="PR:Q9FJX5"/>
<dbReference type="Proteomes" id="UP000006548">
    <property type="component" value="Chromosome 5"/>
</dbReference>
<dbReference type="ExpressionAtlas" id="Q9FJX5">
    <property type="expression patterns" value="baseline and differential"/>
</dbReference>
<dbReference type="GO" id="GO:0005737">
    <property type="term" value="C:cytoplasm"/>
    <property type="evidence" value="ECO:0000314"/>
    <property type="project" value="TAIR"/>
</dbReference>
<dbReference type="GO" id="GO:0000325">
    <property type="term" value="C:plant-type vacuole"/>
    <property type="evidence" value="ECO:0007005"/>
    <property type="project" value="TAIR"/>
</dbReference>
<dbReference type="GO" id="GO:0005516">
    <property type="term" value="F:calmodulin binding"/>
    <property type="evidence" value="ECO:0000314"/>
    <property type="project" value="UniProtKB"/>
</dbReference>
<dbReference type="GO" id="GO:0008270">
    <property type="term" value="F:zinc ion binding"/>
    <property type="evidence" value="ECO:0007669"/>
    <property type="project" value="UniProtKB-KW"/>
</dbReference>
<dbReference type="GO" id="GO:0016567">
    <property type="term" value="P:protein ubiquitination"/>
    <property type="evidence" value="ECO:0007669"/>
    <property type="project" value="UniProtKB-UniPathway"/>
</dbReference>
<dbReference type="GO" id="GO:0006355">
    <property type="term" value="P:regulation of DNA-templated transcription"/>
    <property type="evidence" value="ECO:0000304"/>
    <property type="project" value="TAIR"/>
</dbReference>
<dbReference type="GO" id="GO:0009733">
    <property type="term" value="P:response to auxin"/>
    <property type="evidence" value="ECO:0000270"/>
    <property type="project" value="TAIR"/>
</dbReference>
<dbReference type="GO" id="GO:0009739">
    <property type="term" value="P:response to gibberellin"/>
    <property type="evidence" value="ECO:0000270"/>
    <property type="project" value="TAIR"/>
</dbReference>
<dbReference type="GO" id="GO:0042542">
    <property type="term" value="P:response to hydrogen peroxide"/>
    <property type="evidence" value="ECO:0000270"/>
    <property type="project" value="UniProtKB"/>
</dbReference>
<dbReference type="GO" id="GO:0009753">
    <property type="term" value="P:response to jasmonic acid"/>
    <property type="evidence" value="ECO:0000270"/>
    <property type="project" value="UniProtKB"/>
</dbReference>
<dbReference type="GO" id="GO:0009751">
    <property type="term" value="P:response to salicylic acid"/>
    <property type="evidence" value="ECO:0000270"/>
    <property type="project" value="UniProtKB"/>
</dbReference>
<dbReference type="GO" id="GO:0009651">
    <property type="term" value="P:response to salt stress"/>
    <property type="evidence" value="ECO:0000270"/>
    <property type="project" value="UniProtKB"/>
</dbReference>
<dbReference type="GO" id="GO:0009611">
    <property type="term" value="P:response to wounding"/>
    <property type="evidence" value="ECO:0000270"/>
    <property type="project" value="UniProtKB"/>
</dbReference>
<dbReference type="CDD" id="cd18313">
    <property type="entry name" value="BTB_POZ_BT"/>
    <property type="match status" value="1"/>
</dbReference>
<dbReference type="FunFam" id="1.20.1020.10:FF:000004">
    <property type="entry name" value="BTB/POZ and TAZ domain-containing protein 2"/>
    <property type="match status" value="1"/>
</dbReference>
<dbReference type="FunFam" id="1.25.40.420:FF:000012">
    <property type="entry name" value="BTB/POZ and TAZ domain-containing protein 2"/>
    <property type="match status" value="1"/>
</dbReference>
<dbReference type="FunFam" id="3.30.710.10:FF:000204">
    <property type="entry name" value="BTB/POZ and TAZ domain-containing protein 3"/>
    <property type="match status" value="1"/>
</dbReference>
<dbReference type="Gene3D" id="1.25.40.420">
    <property type="match status" value="1"/>
</dbReference>
<dbReference type="Gene3D" id="3.30.710.10">
    <property type="entry name" value="Potassium Channel Kv1.1, Chain A"/>
    <property type="match status" value="1"/>
</dbReference>
<dbReference type="Gene3D" id="1.20.1020.10">
    <property type="entry name" value="TAZ domain"/>
    <property type="match status" value="1"/>
</dbReference>
<dbReference type="InterPro" id="IPR044513">
    <property type="entry name" value="BT1/2/3/4/5"/>
</dbReference>
<dbReference type="InterPro" id="IPR000210">
    <property type="entry name" value="BTB/POZ_dom"/>
</dbReference>
<dbReference type="InterPro" id="IPR011333">
    <property type="entry name" value="SKP1/BTB/POZ_sf"/>
</dbReference>
<dbReference type="InterPro" id="IPR035898">
    <property type="entry name" value="TAZ_dom_sf"/>
</dbReference>
<dbReference type="InterPro" id="IPR000197">
    <property type="entry name" value="Znf_TAZ"/>
</dbReference>
<dbReference type="PANTHER" id="PTHR46287">
    <property type="entry name" value="BTB/POZ AND TAZ DOMAIN-CONTAINING PROTEIN 3-RELATED"/>
    <property type="match status" value="1"/>
</dbReference>
<dbReference type="PANTHER" id="PTHR46287:SF11">
    <property type="entry name" value="BTB_POZ AND TAZ DOMAIN-CONTAINING PROTEIN 4"/>
    <property type="match status" value="1"/>
</dbReference>
<dbReference type="Pfam" id="PF00651">
    <property type="entry name" value="BTB"/>
    <property type="match status" value="1"/>
</dbReference>
<dbReference type="Pfam" id="PF02135">
    <property type="entry name" value="zf-TAZ"/>
    <property type="match status" value="1"/>
</dbReference>
<dbReference type="SMART" id="SM00225">
    <property type="entry name" value="BTB"/>
    <property type="match status" value="1"/>
</dbReference>
<dbReference type="SMART" id="SM00551">
    <property type="entry name" value="ZnF_TAZ"/>
    <property type="match status" value="1"/>
</dbReference>
<dbReference type="SUPFAM" id="SSF54695">
    <property type="entry name" value="POZ domain"/>
    <property type="match status" value="1"/>
</dbReference>
<dbReference type="SUPFAM" id="SSF57933">
    <property type="entry name" value="TAZ domain"/>
    <property type="match status" value="1"/>
</dbReference>
<dbReference type="PROSITE" id="PS50097">
    <property type="entry name" value="BTB"/>
    <property type="match status" value="1"/>
</dbReference>
<keyword id="KW-0025">Alternative splicing</keyword>
<keyword id="KW-0963">Cytoplasm</keyword>
<keyword id="KW-0479">Metal-binding</keyword>
<keyword id="KW-1185">Reference proteome</keyword>
<keyword id="KW-0833">Ubl conjugation pathway</keyword>
<keyword id="KW-0862">Zinc</keyword>
<keyword id="KW-0863">Zinc-finger</keyword>
<comment type="function">
    <text evidence="1">May act as a substrate-specific adapter of an E3 ubiquitin-protein ligase complex (CUL3-RBX1-BTB) which mediates the ubiquitination and subsequent proteasomal degradation of target proteins.</text>
</comment>
<comment type="pathway">
    <text>Protein modification; protein ubiquitination.</text>
</comment>
<comment type="subunit">
    <text evidence="4">Interacts with GTE11/BET10 through the BTB domain.</text>
</comment>
<comment type="subcellular location">
    <subcellularLocation>
        <location evidence="6">Cytoplasm</location>
    </subcellularLocation>
</comment>
<comment type="alternative products">
    <event type="alternative splicing"/>
    <isoform>
        <id>Q9FJX5-1</id>
        <name>1</name>
        <sequence type="displayed"/>
    </isoform>
    <isoform>
        <id>Q9FJX5-2</id>
        <name>2</name>
        <sequence type="described" ref="VSP_040776"/>
    </isoform>
</comment>
<comment type="tissue specificity">
    <text evidence="4 6">Preferentially expressed in leaves, stems and flowers.</text>
</comment>
<comment type="induction">
    <text evidence="4 6">Up-regulated by auxin (IAA), salicylic acid (SA), methyl jasmonate (MeJA), hydrogen peroxide, wounding and NaCl.</text>
</comment>
<comment type="domain">
    <text evidence="5">The BTB/POZ domain mediates the interaction with some component of ubiquitin ligase complexes.</text>
</comment>
<comment type="miscellaneous">
    <molecule>Isoform 2</molecule>
    <text evidence="7">May be due to an intron retention.</text>
</comment>
<gene>
    <name type="primary">BT4</name>
    <name type="ordered locus">At5g67480</name>
    <name type="ORF">K9I9.4</name>
</gene>
<organism>
    <name type="scientific">Arabidopsis thaliana</name>
    <name type="common">Mouse-ear cress</name>
    <dbReference type="NCBI Taxonomy" id="3702"/>
    <lineage>
        <taxon>Eukaryota</taxon>
        <taxon>Viridiplantae</taxon>
        <taxon>Streptophyta</taxon>
        <taxon>Embryophyta</taxon>
        <taxon>Tracheophyta</taxon>
        <taxon>Spermatophyta</taxon>
        <taxon>Magnoliopsida</taxon>
        <taxon>eudicotyledons</taxon>
        <taxon>Gunneridae</taxon>
        <taxon>Pentapetalae</taxon>
        <taxon>rosids</taxon>
        <taxon>malvids</taxon>
        <taxon>Brassicales</taxon>
        <taxon>Brassicaceae</taxon>
        <taxon>Camelineae</taxon>
        <taxon>Arabidopsis</taxon>
    </lineage>
</organism>
<feature type="chain" id="PRO_0000406145" description="BTB/POZ and TAZ domain-containing protein 4">
    <location>
        <begin position="1"/>
        <end position="372"/>
    </location>
</feature>
<feature type="domain" description="BTB" evidence="2">
    <location>
        <begin position="60"/>
        <end position="128"/>
    </location>
</feature>
<feature type="zinc finger region" description="TAZ-type">
    <location>
        <begin position="238"/>
        <end position="330"/>
    </location>
</feature>
<feature type="region of interest" description="Disordered" evidence="3">
    <location>
        <begin position="14"/>
        <end position="37"/>
    </location>
</feature>
<feature type="region of interest" description="CaM-binding" evidence="1">
    <location>
        <begin position="341"/>
        <end position="364"/>
    </location>
</feature>
<feature type="splice variant" id="VSP_040776" description="In isoform 2." evidence="7">
    <original>M</original>
    <variation>MQGREDKLNKRM</variation>
    <location>
        <position position="1"/>
    </location>
</feature>
<sequence>MVTGCVDLHQSFKSADSSSVPIPPPLPSKSDGLKKKLGHSSVSTATRDMWDRLFNDGYKADVVIYTDNGSIIYAHANILGTASTVIKGMLKQAKRHGKWHTISIRGVPHDAVRVFIRFLYSSCYEKEEMNEFIMHLLLLSHAYVVPQLKRVCEWHLEHGLLTTENVVDVFQLALLCDFPRLSLISHRMIMKHFNELSATEAWTAMKKSHPFLEKEVRDSVIIEANTRKERMRKRNDQRIYSQLYEAMEALVHICRDGCKTIGPHDKDFKPNHATCNYEACKGLESLIRHFAGCKLRVPGGCVHCKRMWQLLELHSRVCAGSDQCRVPLCRNLKEKMEKQSKKDESRWKLLVKNVLGSKKIGGSPFFLPVTNC</sequence>
<name>BT4_ARATH</name>
<reference key="1">
    <citation type="journal article" date="2004" name="Plant Mol. Biol.">
        <title>A novel family of Ca2+/calmodulin-binding proteins involved in transcriptional regulation: interaction with fsh/Ring3 class transcription activators.</title>
        <authorList>
            <person name="Du L."/>
            <person name="Poovaiah B.W."/>
        </authorList>
    </citation>
    <scope>NUCLEOTIDE SEQUENCE [MRNA] (ISOFORM 1)</scope>
    <scope>GENE FAMILY</scope>
    <scope>NOMENCLATURE</scope>
    <scope>INTERACTION WITH GTE11</scope>
    <scope>TISSUE SPECIFICITY</scope>
    <scope>INDUCTION</scope>
    <source>
        <strain>cv. Columbia</strain>
    </source>
</reference>
<reference key="2">
    <citation type="journal article" date="1998" name="DNA Res.">
        <title>Structural analysis of Arabidopsis thaliana chromosome 5. VI. Sequence features of the regions of 1,367,185 bp covered by 19 physically assigned P1 and TAC clones.</title>
        <authorList>
            <person name="Kotani H."/>
            <person name="Nakamura Y."/>
            <person name="Sato S."/>
            <person name="Asamizu E."/>
            <person name="Kaneko T."/>
            <person name="Miyajima N."/>
            <person name="Tabata S."/>
        </authorList>
    </citation>
    <scope>NUCLEOTIDE SEQUENCE [LARGE SCALE GENOMIC DNA]</scope>
    <source>
        <strain>cv. Columbia</strain>
    </source>
</reference>
<reference key="3">
    <citation type="journal article" date="2017" name="Plant J.">
        <title>Araport11: a complete reannotation of the Arabidopsis thaliana reference genome.</title>
        <authorList>
            <person name="Cheng C.Y."/>
            <person name="Krishnakumar V."/>
            <person name="Chan A.P."/>
            <person name="Thibaud-Nissen F."/>
            <person name="Schobel S."/>
            <person name="Town C.D."/>
        </authorList>
    </citation>
    <scope>GENOME REANNOTATION</scope>
    <source>
        <strain>cv. Columbia</strain>
    </source>
</reference>
<reference key="4">
    <citation type="journal article" date="2003" name="Science">
        <title>Empirical analysis of transcriptional activity in the Arabidopsis genome.</title>
        <authorList>
            <person name="Yamada K."/>
            <person name="Lim J."/>
            <person name="Dale J.M."/>
            <person name="Chen H."/>
            <person name="Shinn P."/>
            <person name="Palm C.J."/>
            <person name="Southwick A.M."/>
            <person name="Wu H.C."/>
            <person name="Kim C.J."/>
            <person name="Nguyen M."/>
            <person name="Pham P.K."/>
            <person name="Cheuk R.F."/>
            <person name="Karlin-Newmann G."/>
            <person name="Liu S.X."/>
            <person name="Lam B."/>
            <person name="Sakano H."/>
            <person name="Wu T."/>
            <person name="Yu G."/>
            <person name="Miranda M."/>
            <person name="Quach H.L."/>
            <person name="Tripp M."/>
            <person name="Chang C.H."/>
            <person name="Lee J.M."/>
            <person name="Toriumi M.J."/>
            <person name="Chan M.M."/>
            <person name="Tang C.C."/>
            <person name="Onodera C.S."/>
            <person name="Deng J.M."/>
            <person name="Akiyama K."/>
            <person name="Ansari Y."/>
            <person name="Arakawa T."/>
            <person name="Banh J."/>
            <person name="Banno F."/>
            <person name="Bowser L."/>
            <person name="Brooks S.Y."/>
            <person name="Carninci P."/>
            <person name="Chao Q."/>
            <person name="Choy N."/>
            <person name="Enju A."/>
            <person name="Goldsmith A.D."/>
            <person name="Gurjal M."/>
            <person name="Hansen N.F."/>
            <person name="Hayashizaki Y."/>
            <person name="Johnson-Hopson C."/>
            <person name="Hsuan V.W."/>
            <person name="Iida K."/>
            <person name="Karnes M."/>
            <person name="Khan S."/>
            <person name="Koesema E."/>
            <person name="Ishida J."/>
            <person name="Jiang P.X."/>
            <person name="Jones T."/>
            <person name="Kawai J."/>
            <person name="Kamiya A."/>
            <person name="Meyers C."/>
            <person name="Nakajima M."/>
            <person name="Narusaka M."/>
            <person name="Seki M."/>
            <person name="Sakurai T."/>
            <person name="Satou M."/>
            <person name="Tamse R."/>
            <person name="Vaysberg M."/>
            <person name="Wallender E.K."/>
            <person name="Wong C."/>
            <person name="Yamamura Y."/>
            <person name="Yuan S."/>
            <person name="Shinozaki K."/>
            <person name="Davis R.W."/>
            <person name="Theologis A."/>
            <person name="Ecker J.R."/>
        </authorList>
    </citation>
    <scope>NUCLEOTIDE SEQUENCE [LARGE SCALE MRNA] (ISOFORM 1)</scope>
    <source>
        <strain>cv. Columbia</strain>
    </source>
</reference>
<reference key="5">
    <citation type="journal article" date="2005" name="J. Biol. Chem.">
        <title>Cullins 3a and 3b assemble with members of the broad complex/tramtrack/bric-a-brac (BTB) protein family to form essential ubiquitin-protein ligases (E3s) in Arabidopsis.</title>
        <authorList>
            <person name="Gingerich D.J."/>
            <person name="Gagne J.M."/>
            <person name="Salter D.W."/>
            <person name="Hellmann H."/>
            <person name="Estelle M."/>
            <person name="Ma L."/>
            <person name="Vierstra R.D."/>
        </authorList>
    </citation>
    <scope>DOMAIN BTB</scope>
</reference>
<reference key="6">
    <citation type="journal article" date="2009" name="Plant J.">
        <title>BTB and TAZ DOMAIN scaffold proteins perform a crucial function in Arabidopsis development.</title>
        <authorList>
            <person name="Robert H.S."/>
            <person name="Quint A."/>
            <person name="Brand D."/>
            <person name="Vivian-Smith A."/>
            <person name="Offringa R."/>
        </authorList>
    </citation>
    <scope>SUBCELLULAR LOCATION</scope>
    <scope>INDUCTION BY AUXIN</scope>
    <scope>TISSUE SPECIFICITY</scope>
</reference>
<protein>
    <recommendedName>
        <fullName>BTB/POZ and TAZ domain-containing protein 4</fullName>
    </recommendedName>
    <alternativeName>
        <fullName>BTB and TAZ domain protein 4</fullName>
    </alternativeName>
</protein>
<proteinExistence type="evidence at protein level"/>
<evidence type="ECO:0000250" key="1"/>
<evidence type="ECO:0000255" key="2">
    <source>
        <dbReference type="PROSITE-ProRule" id="PRU00037"/>
    </source>
</evidence>
<evidence type="ECO:0000256" key="3">
    <source>
        <dbReference type="SAM" id="MobiDB-lite"/>
    </source>
</evidence>
<evidence type="ECO:0000269" key="4">
    <source>
    </source>
</evidence>
<evidence type="ECO:0000269" key="5">
    <source>
    </source>
</evidence>
<evidence type="ECO:0000269" key="6">
    <source>
    </source>
</evidence>
<evidence type="ECO:0000305" key="7"/>
<accession>Q9FJX5</accession>
<accession>Q3E848</accession>